<sequence length="43" mass="4915">MYRRLLLNLFCMVFLQACLKPMSDPKAEKVDSQVQCGFGSKDC</sequence>
<protein>
    <recommendedName>
        <fullName>Uncharacterized protein HP_0122</fullName>
    </recommendedName>
</protein>
<evidence type="ECO:0000255" key="1">
    <source>
        <dbReference type="PROSITE-ProRule" id="PRU00303"/>
    </source>
</evidence>
<organism>
    <name type="scientific">Helicobacter pylori (strain ATCC 700392 / 26695)</name>
    <name type="common">Campylobacter pylori</name>
    <dbReference type="NCBI Taxonomy" id="85962"/>
    <lineage>
        <taxon>Bacteria</taxon>
        <taxon>Pseudomonadati</taxon>
        <taxon>Campylobacterota</taxon>
        <taxon>Epsilonproteobacteria</taxon>
        <taxon>Campylobacterales</taxon>
        <taxon>Helicobacteraceae</taxon>
        <taxon>Helicobacter</taxon>
    </lineage>
</organism>
<accession>P64653</accession>
<accession>O24940</accession>
<keyword id="KW-1185">Reference proteome</keyword>
<keyword id="KW-0732">Signal</keyword>
<gene>
    <name type="ordered locus">HP_0122</name>
</gene>
<proteinExistence type="inferred from homology"/>
<reference key="1">
    <citation type="journal article" date="1997" name="Nature">
        <title>The complete genome sequence of the gastric pathogen Helicobacter pylori.</title>
        <authorList>
            <person name="Tomb J.-F."/>
            <person name="White O."/>
            <person name="Kerlavage A.R."/>
            <person name="Clayton R.A."/>
            <person name="Sutton G.G."/>
            <person name="Fleischmann R.D."/>
            <person name="Ketchum K.A."/>
            <person name="Klenk H.-P."/>
            <person name="Gill S.R."/>
            <person name="Dougherty B.A."/>
            <person name="Nelson K.E."/>
            <person name="Quackenbush J."/>
            <person name="Zhou L."/>
            <person name="Kirkness E.F."/>
            <person name="Peterson S.N."/>
            <person name="Loftus B.J."/>
            <person name="Richardson D.L."/>
            <person name="Dodson R.J."/>
            <person name="Khalak H.G."/>
            <person name="Glodek A."/>
            <person name="McKenney K."/>
            <person name="FitzGerald L.M."/>
            <person name="Lee N."/>
            <person name="Adams M.D."/>
            <person name="Hickey E.K."/>
            <person name="Berg D.E."/>
            <person name="Gocayne J.D."/>
            <person name="Utterback T.R."/>
            <person name="Peterson J.D."/>
            <person name="Kelley J.M."/>
            <person name="Cotton M.D."/>
            <person name="Weidman J.F."/>
            <person name="Fujii C."/>
            <person name="Bowman C."/>
            <person name="Watthey L."/>
            <person name="Wallin E."/>
            <person name="Hayes W.S."/>
            <person name="Borodovsky M."/>
            <person name="Karp P.D."/>
            <person name="Smith H.O."/>
            <person name="Fraser C.M."/>
            <person name="Venter J.C."/>
        </authorList>
    </citation>
    <scope>NUCLEOTIDE SEQUENCE [LARGE SCALE GENOMIC DNA]</scope>
    <source>
        <strain>ATCC 700392 / 26695</strain>
    </source>
</reference>
<name>Y122_HELPY</name>
<dbReference type="EMBL" id="AE000511">
    <property type="protein sequence ID" value="AAD07200.1"/>
    <property type="molecule type" value="Genomic_DNA"/>
</dbReference>
<dbReference type="PIR" id="B64535">
    <property type="entry name" value="B64535"/>
</dbReference>
<dbReference type="RefSeq" id="NP_206922.1">
    <property type="nucleotide sequence ID" value="NC_000915.1"/>
</dbReference>
<dbReference type="STRING" id="85962.HP_0122"/>
<dbReference type="PaxDb" id="85962-C694_00605"/>
<dbReference type="EnsemblBacteria" id="AAD07200">
    <property type="protein sequence ID" value="AAD07200"/>
    <property type="gene ID" value="HP_0122"/>
</dbReference>
<dbReference type="KEGG" id="hpy:HP_0122"/>
<dbReference type="PATRIC" id="fig|85962.8.peg.130"/>
<dbReference type="InParanoid" id="P64653"/>
<dbReference type="OrthoDB" id="5326090at2"/>
<dbReference type="Proteomes" id="UP000000429">
    <property type="component" value="Chromosome"/>
</dbReference>
<dbReference type="PROSITE" id="PS51257">
    <property type="entry name" value="PROKAR_LIPOPROTEIN"/>
    <property type="match status" value="1"/>
</dbReference>
<feature type="signal peptide" evidence="1">
    <location>
        <begin position="1"/>
        <end position="17"/>
    </location>
</feature>
<feature type="chain" id="PRO_0000013978" description="Uncharacterized protein HP_0122">
    <location>
        <begin position="18"/>
        <end position="43"/>
    </location>
</feature>